<accession>Q42434</accession>
<gene>
    <name type="primary">HSC70</name>
</gene>
<name>BIP_SPIOL</name>
<reference key="1">
    <citation type="journal article" date="1994" name="Plant Physiol.">
        <title>A cDNA encoding the endoplasmic reticulum-luminal heat-shock protein from spinach (Spinacia oleracea L.).</title>
        <authorList>
            <person name="Anderson J.V."/>
            <person name="Neven L.G."/>
            <person name="Li Q.B."/>
            <person name="Haskell D.W."/>
            <person name="Guy C.L."/>
        </authorList>
    </citation>
    <scope>NUCLEOTIDE SEQUENCE [MRNA]</scope>
    <source>
        <strain>cv. Bloomsdale</strain>
        <tissue>Leaf</tissue>
    </source>
</reference>
<reference key="2">
    <citation type="journal article" date="1994" name="Plant Physiol.">
        <title>Structural organization of the spinach endoplasmic reticulum-luminal 70-kilodalton heat-shock cognate gene and expression of 70-kilodalton heat-shock genes during cold acclimation.</title>
        <authorList>
            <person name="Anderson J.V."/>
            <person name="Li Q.B."/>
            <person name="Haskell D.W."/>
            <person name="Guy C.L."/>
        </authorList>
    </citation>
    <scope>NUCLEOTIDE SEQUENCE [GENOMIC DNA]</scope>
    <source>
        <strain>cv. Bloomsdale</strain>
        <tissue>Leaf</tissue>
    </source>
</reference>
<feature type="signal peptide" evidence="1">
    <location>
        <begin position="1"/>
        <end position="28"/>
    </location>
</feature>
<feature type="chain" id="PRO_0000013593" description="Luminal-binding protein">
    <location>
        <begin position="29"/>
        <end position="668"/>
    </location>
</feature>
<feature type="region of interest" description="Disordered" evidence="3">
    <location>
        <begin position="643"/>
        <end position="668"/>
    </location>
</feature>
<feature type="short sequence motif" description="Prevents secretion from ER" evidence="2">
    <location>
        <begin position="665"/>
        <end position="668"/>
    </location>
</feature>
<feature type="compositionally biased region" description="Acidic residues" evidence="3">
    <location>
        <begin position="656"/>
        <end position="668"/>
    </location>
</feature>
<feature type="glycosylation site" description="N-linked (GlcNAc...) asparagine" evidence="1">
    <location>
        <position position="617"/>
    </location>
</feature>
<proteinExistence type="evidence at transcript level"/>
<keyword id="KW-0067">ATP-binding</keyword>
<keyword id="KW-0256">Endoplasmic reticulum</keyword>
<keyword id="KW-0325">Glycoprotein</keyword>
<keyword id="KW-0547">Nucleotide-binding</keyword>
<keyword id="KW-1185">Reference proteome</keyword>
<keyword id="KW-0732">Signal</keyword>
<sequence>MAVAWKSRASSIAFGIVLLGSLFAFVSAKDEAPKLGTVIGIDLGTTYSCVGVYKDGKVEIIANDQGNRITPSWVAFTNDERLIGEAAKNQAAANPERTIFDVKRLIGRKFEDKEVQKDMKLVPYKIVNRDGKPYIQVKVQEGETKVFSPEEISAMILTKMKETAETFLGKKIKDAVVTVPAYFNDAQRQATKDAGVIAGLNVARIINEPTAAAIAYGLDKRGGEKNILVFDLGGGTFDVSVLTIDNGVFEVLATNGDTHLGGEDFDQRLMEYFIKLIKKKHTKDISKDNRALGKLRRECERAKRALSSQHQVRVEIESLFDGVDFSEPLTRARFEELNNDLFRKTMGPVKKAMDDAGLEKNQIDEIVLVGGSTRIPKVQQLLKEFFNGKEPSKGVNPDEAVAFGAAVQGSILSGEGGEETKEILLLDVAPLTLGIETVGGVMTKLIPRNTVIPTKKSQVFTTYQDQQTTVTIQVFEGERSLTKDCRLLGKFDLTGIAPAPRGTPQIEVTFEVDANGILNVKAEDKASGKSEKITITNDKGRLSQEEIERMVREAEEFAEEDKKVKEKIDARNSLETYIYNMKNQISDADKLADKLESDEKEKIEGAVKEALEWLDDNQSAEKEDYDEKLKEVEAVCNPIITAVYQRSGGPSGESGADSEDSEEGHDEL</sequence>
<dbReference type="EMBL" id="L23551">
    <property type="protein sequence ID" value="AAA21808.1"/>
    <property type="molecule type" value="mRNA"/>
</dbReference>
<dbReference type="EMBL" id="L23552">
    <property type="protein sequence ID" value="AAA21806.1"/>
    <property type="molecule type" value="Genomic_DNA"/>
</dbReference>
<dbReference type="SMR" id="Q42434"/>
<dbReference type="GlyCosmos" id="Q42434">
    <property type="glycosylation" value="1 site, No reported glycans"/>
</dbReference>
<dbReference type="OrthoDB" id="2401965at2759"/>
<dbReference type="Proteomes" id="UP001155700">
    <property type="component" value="Unplaced"/>
</dbReference>
<dbReference type="GO" id="GO:0005737">
    <property type="term" value="C:cytoplasm"/>
    <property type="evidence" value="ECO:0000318"/>
    <property type="project" value="GO_Central"/>
</dbReference>
<dbReference type="GO" id="GO:0034663">
    <property type="term" value="C:endoplasmic reticulum chaperone complex"/>
    <property type="evidence" value="ECO:0000318"/>
    <property type="project" value="GO_Central"/>
</dbReference>
<dbReference type="GO" id="GO:0005788">
    <property type="term" value="C:endoplasmic reticulum lumen"/>
    <property type="evidence" value="ECO:0000318"/>
    <property type="project" value="GO_Central"/>
</dbReference>
<dbReference type="GO" id="GO:0016020">
    <property type="term" value="C:membrane"/>
    <property type="evidence" value="ECO:0000318"/>
    <property type="project" value="GO_Central"/>
</dbReference>
<dbReference type="GO" id="GO:0005634">
    <property type="term" value="C:nucleus"/>
    <property type="evidence" value="ECO:0000318"/>
    <property type="project" value="GO_Central"/>
</dbReference>
<dbReference type="GO" id="GO:0005524">
    <property type="term" value="F:ATP binding"/>
    <property type="evidence" value="ECO:0007669"/>
    <property type="project" value="UniProtKB-KW"/>
</dbReference>
<dbReference type="GO" id="GO:0016887">
    <property type="term" value="F:ATP hydrolysis activity"/>
    <property type="evidence" value="ECO:0000318"/>
    <property type="project" value="GO_Central"/>
</dbReference>
<dbReference type="GO" id="GO:0140662">
    <property type="term" value="F:ATP-dependent protein folding chaperone"/>
    <property type="evidence" value="ECO:0007669"/>
    <property type="project" value="InterPro"/>
</dbReference>
<dbReference type="GO" id="GO:0031072">
    <property type="term" value="F:heat shock protein binding"/>
    <property type="evidence" value="ECO:0000318"/>
    <property type="project" value="GO_Central"/>
</dbReference>
<dbReference type="GO" id="GO:0044183">
    <property type="term" value="F:protein folding chaperone"/>
    <property type="evidence" value="ECO:0000318"/>
    <property type="project" value="GO_Central"/>
</dbReference>
<dbReference type="GO" id="GO:0051085">
    <property type="term" value="P:chaperone cofactor-dependent protein refolding"/>
    <property type="evidence" value="ECO:0000318"/>
    <property type="project" value="GO_Central"/>
</dbReference>
<dbReference type="GO" id="GO:0030968">
    <property type="term" value="P:endoplasmic reticulum unfolded protein response"/>
    <property type="evidence" value="ECO:0000318"/>
    <property type="project" value="GO_Central"/>
</dbReference>
<dbReference type="GO" id="GO:0036503">
    <property type="term" value="P:ERAD pathway"/>
    <property type="evidence" value="ECO:0000318"/>
    <property type="project" value="GO_Central"/>
</dbReference>
<dbReference type="GO" id="GO:0042026">
    <property type="term" value="P:protein refolding"/>
    <property type="evidence" value="ECO:0000318"/>
    <property type="project" value="GO_Central"/>
</dbReference>
<dbReference type="CDD" id="cd10241">
    <property type="entry name" value="ASKHA_NBD_HSP70_BiP"/>
    <property type="match status" value="1"/>
</dbReference>
<dbReference type="FunFam" id="2.60.34.10:FF:000002">
    <property type="entry name" value="Heat shock 70 kDa"/>
    <property type="match status" value="1"/>
</dbReference>
<dbReference type="FunFam" id="3.90.640.10:FF:000002">
    <property type="entry name" value="Heat shock 70 kDa"/>
    <property type="match status" value="1"/>
</dbReference>
<dbReference type="FunFam" id="3.30.420.40:FF:000026">
    <property type="entry name" value="Heat shock protein 70"/>
    <property type="match status" value="1"/>
</dbReference>
<dbReference type="FunFam" id="1.20.1270.10:FF:000015">
    <property type="entry name" value="Luminal-binding protein 5"/>
    <property type="match status" value="1"/>
</dbReference>
<dbReference type="Gene3D" id="1.20.1270.10">
    <property type="match status" value="1"/>
</dbReference>
<dbReference type="Gene3D" id="3.30.420.40">
    <property type="match status" value="2"/>
</dbReference>
<dbReference type="Gene3D" id="3.90.640.10">
    <property type="entry name" value="Actin, Chain A, domain 4"/>
    <property type="match status" value="1"/>
</dbReference>
<dbReference type="Gene3D" id="2.60.34.10">
    <property type="entry name" value="Substrate Binding Domain Of DNAk, Chain A, domain 1"/>
    <property type="match status" value="1"/>
</dbReference>
<dbReference type="InterPro" id="IPR043129">
    <property type="entry name" value="ATPase_NBD"/>
</dbReference>
<dbReference type="InterPro" id="IPR042050">
    <property type="entry name" value="BIP_NBD"/>
</dbReference>
<dbReference type="InterPro" id="IPR018181">
    <property type="entry name" value="Heat_shock_70_CS"/>
</dbReference>
<dbReference type="InterPro" id="IPR029048">
    <property type="entry name" value="HSP70_C_sf"/>
</dbReference>
<dbReference type="InterPro" id="IPR029047">
    <property type="entry name" value="HSP70_peptide-bd_sf"/>
</dbReference>
<dbReference type="InterPro" id="IPR013126">
    <property type="entry name" value="Hsp_70_fam"/>
</dbReference>
<dbReference type="NCBIfam" id="NF001413">
    <property type="entry name" value="PRK00290.1"/>
    <property type="match status" value="1"/>
</dbReference>
<dbReference type="PANTHER" id="PTHR19375">
    <property type="entry name" value="HEAT SHOCK PROTEIN 70KDA"/>
    <property type="match status" value="1"/>
</dbReference>
<dbReference type="Pfam" id="PF00012">
    <property type="entry name" value="HSP70"/>
    <property type="match status" value="1"/>
</dbReference>
<dbReference type="PRINTS" id="PR00301">
    <property type="entry name" value="HEATSHOCK70"/>
</dbReference>
<dbReference type="SUPFAM" id="SSF53067">
    <property type="entry name" value="Actin-like ATPase domain"/>
    <property type="match status" value="2"/>
</dbReference>
<dbReference type="SUPFAM" id="SSF100934">
    <property type="entry name" value="Heat shock protein 70kD (HSP70), C-terminal subdomain"/>
    <property type="match status" value="1"/>
</dbReference>
<dbReference type="SUPFAM" id="SSF100920">
    <property type="entry name" value="Heat shock protein 70kD (HSP70), peptide-binding domain"/>
    <property type="match status" value="1"/>
</dbReference>
<dbReference type="PROSITE" id="PS00014">
    <property type="entry name" value="ER_TARGET"/>
    <property type="match status" value="1"/>
</dbReference>
<dbReference type="PROSITE" id="PS00297">
    <property type="entry name" value="HSP70_1"/>
    <property type="match status" value="1"/>
</dbReference>
<dbReference type="PROSITE" id="PS00329">
    <property type="entry name" value="HSP70_2"/>
    <property type="match status" value="1"/>
</dbReference>
<dbReference type="PROSITE" id="PS01036">
    <property type="entry name" value="HSP70_3"/>
    <property type="match status" value="1"/>
</dbReference>
<comment type="function">
    <text>Probably plays a role in facilitating the assembly of multimeric protein complexes inside the ER.</text>
</comment>
<comment type="subcellular location">
    <subcellularLocation>
        <location>Endoplasmic reticulum lumen</location>
    </subcellularLocation>
</comment>
<comment type="similarity">
    <text evidence="4">Belongs to the heat shock protein 70 family.</text>
</comment>
<protein>
    <recommendedName>
        <fullName>Luminal-binding protein</fullName>
        <shortName>BiP</shortName>
    </recommendedName>
    <alternativeName>
        <fullName>78 kDa glucose-regulated protein homolog</fullName>
        <shortName>GRP-78</shortName>
    </alternativeName>
</protein>
<evidence type="ECO:0000255" key="1"/>
<evidence type="ECO:0000255" key="2">
    <source>
        <dbReference type="PROSITE-ProRule" id="PRU10138"/>
    </source>
</evidence>
<evidence type="ECO:0000256" key="3">
    <source>
        <dbReference type="SAM" id="MobiDB-lite"/>
    </source>
</evidence>
<evidence type="ECO:0000305" key="4"/>
<organism>
    <name type="scientific">Spinacia oleracea</name>
    <name type="common">Spinach</name>
    <dbReference type="NCBI Taxonomy" id="3562"/>
    <lineage>
        <taxon>Eukaryota</taxon>
        <taxon>Viridiplantae</taxon>
        <taxon>Streptophyta</taxon>
        <taxon>Embryophyta</taxon>
        <taxon>Tracheophyta</taxon>
        <taxon>Spermatophyta</taxon>
        <taxon>Magnoliopsida</taxon>
        <taxon>eudicotyledons</taxon>
        <taxon>Gunneridae</taxon>
        <taxon>Pentapetalae</taxon>
        <taxon>Caryophyllales</taxon>
        <taxon>Chenopodiaceae</taxon>
        <taxon>Chenopodioideae</taxon>
        <taxon>Anserineae</taxon>
        <taxon>Spinacia</taxon>
    </lineage>
</organism>